<name>5DNU_VIBPA</name>
<gene>
    <name type="ordered locus">VP0926</name>
</gene>
<accession>Q87R72</accession>
<protein>
    <recommendedName>
        <fullName evidence="1">5'-deoxynucleotidase VP0926</fullName>
        <ecNumber evidence="1">3.1.3.89</ecNumber>
    </recommendedName>
    <alternativeName>
        <fullName evidence="1">5'-deoxyribonucleotidase</fullName>
    </alternativeName>
    <alternativeName>
        <fullName evidence="1">Nucleoside 5'-monophosphate phosphohydrolase</fullName>
    </alternativeName>
</protein>
<dbReference type="EC" id="3.1.3.89" evidence="1"/>
<dbReference type="EMBL" id="BA000031">
    <property type="protein sequence ID" value="BAC59189.1"/>
    <property type="status" value="ALT_INIT"/>
    <property type="molecule type" value="Genomic_DNA"/>
</dbReference>
<dbReference type="RefSeq" id="NP_797305.1">
    <property type="nucleotide sequence ID" value="NC_004603.1"/>
</dbReference>
<dbReference type="SMR" id="Q87R72"/>
<dbReference type="GeneID" id="1188424"/>
<dbReference type="KEGG" id="vpa:VP0926"/>
<dbReference type="PATRIC" id="fig|223926.6.peg.878"/>
<dbReference type="eggNOG" id="COG1896">
    <property type="taxonomic scope" value="Bacteria"/>
</dbReference>
<dbReference type="HOGENOM" id="CLU_084784_0_0_6"/>
<dbReference type="Proteomes" id="UP000002493">
    <property type="component" value="Chromosome 1"/>
</dbReference>
<dbReference type="GO" id="GO:0005737">
    <property type="term" value="C:cytoplasm"/>
    <property type="evidence" value="ECO:0007669"/>
    <property type="project" value="UniProtKB-SubCell"/>
</dbReference>
<dbReference type="GO" id="GO:0002953">
    <property type="term" value="F:5'-deoxynucleotidase activity"/>
    <property type="evidence" value="ECO:0007669"/>
    <property type="project" value="UniProtKB-EC"/>
</dbReference>
<dbReference type="GO" id="GO:0046872">
    <property type="term" value="F:metal ion binding"/>
    <property type="evidence" value="ECO:0007669"/>
    <property type="project" value="UniProtKB-KW"/>
</dbReference>
<dbReference type="GO" id="GO:0000166">
    <property type="term" value="F:nucleotide binding"/>
    <property type="evidence" value="ECO:0007669"/>
    <property type="project" value="UniProtKB-KW"/>
</dbReference>
<dbReference type="CDD" id="cd00077">
    <property type="entry name" value="HDc"/>
    <property type="match status" value="1"/>
</dbReference>
<dbReference type="FunFam" id="1.10.3210.10:FF:000002">
    <property type="entry name" value="Nucleotidase YfbR"/>
    <property type="match status" value="1"/>
</dbReference>
<dbReference type="Gene3D" id="1.10.3210.10">
    <property type="entry name" value="Hypothetical protein af1432"/>
    <property type="match status" value="1"/>
</dbReference>
<dbReference type="HAMAP" id="MF_01100">
    <property type="entry name" value="5DNU"/>
    <property type="match status" value="1"/>
</dbReference>
<dbReference type="InterPro" id="IPR003607">
    <property type="entry name" value="HD/PDEase_dom"/>
</dbReference>
<dbReference type="InterPro" id="IPR006674">
    <property type="entry name" value="HD_domain"/>
</dbReference>
<dbReference type="InterPro" id="IPR022971">
    <property type="entry name" value="YfbR"/>
</dbReference>
<dbReference type="InterPro" id="IPR039356">
    <property type="entry name" value="YfbR/HDDC2"/>
</dbReference>
<dbReference type="NCBIfam" id="NF003009">
    <property type="entry name" value="PRK03826.1"/>
    <property type="match status" value="1"/>
</dbReference>
<dbReference type="PANTHER" id="PTHR11845">
    <property type="entry name" value="5'-DEOXYNUCLEOTIDASE HDDC2"/>
    <property type="match status" value="1"/>
</dbReference>
<dbReference type="PANTHER" id="PTHR11845:SF13">
    <property type="entry name" value="5'-DEOXYNUCLEOTIDASE HDDC2"/>
    <property type="match status" value="1"/>
</dbReference>
<dbReference type="Pfam" id="PF12917">
    <property type="entry name" value="YfbR-like"/>
    <property type="match status" value="1"/>
</dbReference>
<dbReference type="SMART" id="SM00471">
    <property type="entry name" value="HDc"/>
    <property type="match status" value="1"/>
</dbReference>
<dbReference type="SUPFAM" id="SSF109604">
    <property type="entry name" value="HD-domain/PDEase-like"/>
    <property type="match status" value="1"/>
</dbReference>
<dbReference type="PROSITE" id="PS51831">
    <property type="entry name" value="HD"/>
    <property type="match status" value="1"/>
</dbReference>
<feature type="chain" id="PRO_0000095062" description="5'-deoxynucleotidase VP0926">
    <location>
        <begin position="1"/>
        <end position="194"/>
    </location>
</feature>
<feature type="domain" description="HD" evidence="2">
    <location>
        <begin position="30"/>
        <end position="142"/>
    </location>
</feature>
<feature type="binding site" evidence="1">
    <location>
        <begin position="18"/>
        <end position="19"/>
    </location>
    <ligand>
        <name>substrate</name>
    </ligand>
</feature>
<feature type="binding site" evidence="1">
    <location>
        <position position="33"/>
    </location>
    <ligand>
        <name>a divalent metal cation</name>
        <dbReference type="ChEBI" id="CHEBI:60240"/>
    </ligand>
</feature>
<feature type="binding site" evidence="1">
    <location>
        <position position="33"/>
    </location>
    <ligand>
        <name>substrate</name>
    </ligand>
</feature>
<feature type="binding site" evidence="1">
    <location>
        <position position="68"/>
    </location>
    <ligand>
        <name>a divalent metal cation</name>
        <dbReference type="ChEBI" id="CHEBI:60240"/>
    </ligand>
</feature>
<feature type="binding site" evidence="1">
    <location>
        <position position="69"/>
    </location>
    <ligand>
        <name>a divalent metal cation</name>
        <dbReference type="ChEBI" id="CHEBI:60240"/>
    </ligand>
</feature>
<feature type="binding site" evidence="1">
    <location>
        <position position="69"/>
    </location>
    <ligand>
        <name>substrate</name>
    </ligand>
</feature>
<feature type="binding site" evidence="1">
    <location>
        <begin position="77"/>
        <end position="80"/>
    </location>
    <ligand>
        <name>substrate</name>
    </ligand>
</feature>
<feature type="binding site" evidence="1">
    <location>
        <position position="137"/>
    </location>
    <ligand>
        <name>a divalent metal cation</name>
        <dbReference type="ChEBI" id="CHEBI:60240"/>
    </ligand>
</feature>
<feature type="binding site" evidence="1">
    <location>
        <position position="137"/>
    </location>
    <ligand>
        <name>substrate</name>
    </ligand>
</feature>
<feature type="site" description="Appears to be important in orienting the phosphate for catalysis" evidence="1">
    <location>
        <position position="18"/>
    </location>
</feature>
<organism>
    <name type="scientific">Vibrio parahaemolyticus serotype O3:K6 (strain RIMD 2210633)</name>
    <dbReference type="NCBI Taxonomy" id="223926"/>
    <lineage>
        <taxon>Bacteria</taxon>
        <taxon>Pseudomonadati</taxon>
        <taxon>Pseudomonadota</taxon>
        <taxon>Gammaproteobacteria</taxon>
        <taxon>Vibrionales</taxon>
        <taxon>Vibrionaceae</taxon>
        <taxon>Vibrio</taxon>
    </lineage>
</organism>
<sequence>MKESHFFAHLARMKLIQRWPLMRSVSPENVSEHSLQVAFVAHALALIKNKKFGGTLNPERIALLAMYHDSSEVLTGDLPTPVKYYNPEIAKEYKKIEAAAEHKLLSMLPEEFQEDFAPFLLSHSSHEEDSQIVKQADSICAYLKCLEELSAGNHEFALAKKRLDVTLQERKTPEMEYFLNTFAPSFELSLDEIS</sequence>
<reference key="1">
    <citation type="journal article" date="2003" name="Lancet">
        <title>Genome sequence of Vibrio parahaemolyticus: a pathogenic mechanism distinct from that of V. cholerae.</title>
        <authorList>
            <person name="Makino K."/>
            <person name="Oshima K."/>
            <person name="Kurokawa K."/>
            <person name="Yokoyama K."/>
            <person name="Uda T."/>
            <person name="Tagomori K."/>
            <person name="Iijima Y."/>
            <person name="Najima M."/>
            <person name="Nakano M."/>
            <person name="Yamashita A."/>
            <person name="Kubota Y."/>
            <person name="Kimura S."/>
            <person name="Yasunaga T."/>
            <person name="Honda T."/>
            <person name="Shinagawa H."/>
            <person name="Hattori M."/>
            <person name="Iida T."/>
        </authorList>
    </citation>
    <scope>NUCLEOTIDE SEQUENCE [LARGE SCALE GENOMIC DNA]</scope>
    <source>
        <strain>RIMD 2210633</strain>
    </source>
</reference>
<evidence type="ECO:0000255" key="1">
    <source>
        <dbReference type="HAMAP-Rule" id="MF_01100"/>
    </source>
</evidence>
<evidence type="ECO:0000255" key="2">
    <source>
        <dbReference type="PROSITE-ProRule" id="PRU01175"/>
    </source>
</evidence>
<evidence type="ECO:0000305" key="3"/>
<keyword id="KW-0963">Cytoplasm</keyword>
<keyword id="KW-0378">Hydrolase</keyword>
<keyword id="KW-0479">Metal-binding</keyword>
<keyword id="KW-0547">Nucleotide-binding</keyword>
<proteinExistence type="inferred from homology"/>
<comment type="function">
    <text evidence="1">Catalyzes the strictly specific dephosphorylation of 2'-deoxyribonucleoside 5'-monophosphates.</text>
</comment>
<comment type="catalytic activity">
    <reaction evidence="1">
        <text>a 2'-deoxyribonucleoside 5'-phosphate + H2O = a 2'-deoxyribonucleoside + phosphate</text>
        <dbReference type="Rhea" id="RHEA:36167"/>
        <dbReference type="ChEBI" id="CHEBI:15377"/>
        <dbReference type="ChEBI" id="CHEBI:18274"/>
        <dbReference type="ChEBI" id="CHEBI:43474"/>
        <dbReference type="ChEBI" id="CHEBI:65317"/>
        <dbReference type="EC" id="3.1.3.89"/>
    </reaction>
</comment>
<comment type="cofactor">
    <cofactor evidence="1">
        <name>a divalent metal cation</name>
        <dbReference type="ChEBI" id="CHEBI:60240"/>
    </cofactor>
</comment>
<comment type="subunit">
    <text evidence="1">Homodimer.</text>
</comment>
<comment type="subcellular location">
    <subcellularLocation>
        <location evidence="1">Cytoplasm</location>
    </subcellularLocation>
</comment>
<comment type="similarity">
    <text evidence="1">Belongs to the 5DNU family.</text>
</comment>
<comment type="sequence caution" evidence="3">
    <conflict type="erroneous initiation">
        <sequence resource="EMBL-CDS" id="BAC59189"/>
    </conflict>
    <text>Extended N-terminus.</text>
</comment>